<reference key="1">
    <citation type="journal article" date="1998" name="Nature">
        <title>Deciphering the biology of Mycobacterium tuberculosis from the complete genome sequence.</title>
        <authorList>
            <person name="Cole S.T."/>
            <person name="Brosch R."/>
            <person name="Parkhill J."/>
            <person name="Garnier T."/>
            <person name="Churcher C.M."/>
            <person name="Harris D.E."/>
            <person name="Gordon S.V."/>
            <person name="Eiglmeier K."/>
            <person name="Gas S."/>
            <person name="Barry C.E. III"/>
            <person name="Tekaia F."/>
            <person name="Badcock K."/>
            <person name="Basham D."/>
            <person name="Brown D."/>
            <person name="Chillingworth T."/>
            <person name="Connor R."/>
            <person name="Davies R.M."/>
            <person name="Devlin K."/>
            <person name="Feltwell T."/>
            <person name="Gentles S."/>
            <person name="Hamlin N."/>
            <person name="Holroyd S."/>
            <person name="Hornsby T."/>
            <person name="Jagels K."/>
            <person name="Krogh A."/>
            <person name="McLean J."/>
            <person name="Moule S."/>
            <person name="Murphy L.D."/>
            <person name="Oliver S."/>
            <person name="Osborne J."/>
            <person name="Quail M.A."/>
            <person name="Rajandream M.A."/>
            <person name="Rogers J."/>
            <person name="Rutter S."/>
            <person name="Seeger K."/>
            <person name="Skelton S."/>
            <person name="Squares S."/>
            <person name="Squares R."/>
            <person name="Sulston J.E."/>
            <person name="Taylor K."/>
            <person name="Whitehead S."/>
            <person name="Barrell B.G."/>
        </authorList>
    </citation>
    <scope>NUCLEOTIDE SEQUENCE [LARGE SCALE GENOMIC DNA]</scope>
    <source>
        <strain>ATCC 25618 / H37Rv</strain>
    </source>
</reference>
<reference key="2">
    <citation type="journal article" date="2006" name="J. Bacteriol.">
        <title>Inactivation of Rv2525c, a substrate of the twin arginine translocation (Tat) system of Mycobacterium tuberculosis, increases beta-lactam susceptibility and virulence.</title>
        <authorList>
            <person name="Saint-Joanis B."/>
            <person name="Demangel C."/>
            <person name="Jackson M."/>
            <person name="Brodin P."/>
            <person name="Marsollier L."/>
            <person name="Boshoff H."/>
            <person name="Cole S.T."/>
        </authorList>
    </citation>
    <scope>DISRUPTION PHENOTYPE</scope>
    <source>
        <strain>H37Rv</strain>
    </source>
</reference>
<reference key="3">
    <citation type="journal article" date="2011" name="Mol. Cell. Proteomics">
        <title>Proteogenomic analysis of Mycobacterium tuberculosis by high resolution mass spectrometry.</title>
        <authorList>
            <person name="Kelkar D.S."/>
            <person name="Kumar D."/>
            <person name="Kumar P."/>
            <person name="Balakrishnan L."/>
            <person name="Muthusamy B."/>
            <person name="Yadav A.K."/>
            <person name="Shrivastava P."/>
            <person name="Marimuthu A."/>
            <person name="Anand S."/>
            <person name="Sundaram H."/>
            <person name="Kingsbury R."/>
            <person name="Harsha H.C."/>
            <person name="Nair B."/>
            <person name="Prasad T.S."/>
            <person name="Chauhan D.S."/>
            <person name="Katoch K."/>
            <person name="Katoch V.M."/>
            <person name="Kumar P."/>
            <person name="Chaerkady R."/>
            <person name="Ramachandran S."/>
            <person name="Dash D."/>
            <person name="Pandey A."/>
        </authorList>
    </citation>
    <scope>IDENTIFICATION BY MASS SPECTROMETRY [LARGE SCALE ANALYSIS]</scope>
    <source>
        <strain>ATCC 25618 / H37Rv</strain>
    </source>
</reference>
<name>TATC_MYCTU</name>
<organism>
    <name type="scientific">Mycobacterium tuberculosis (strain ATCC 25618 / H37Rv)</name>
    <dbReference type="NCBI Taxonomy" id="83332"/>
    <lineage>
        <taxon>Bacteria</taxon>
        <taxon>Bacillati</taxon>
        <taxon>Actinomycetota</taxon>
        <taxon>Actinomycetes</taxon>
        <taxon>Mycobacteriales</taxon>
        <taxon>Mycobacteriaceae</taxon>
        <taxon>Mycobacterium</taxon>
        <taxon>Mycobacterium tuberculosis complex</taxon>
    </lineage>
</organism>
<keyword id="KW-1003">Cell membrane</keyword>
<keyword id="KW-0472">Membrane</keyword>
<keyword id="KW-0653">Protein transport</keyword>
<keyword id="KW-1185">Reference proteome</keyword>
<keyword id="KW-0811">Translocation</keyword>
<keyword id="KW-0812">Transmembrane</keyword>
<keyword id="KW-1133">Transmembrane helix</keyword>
<keyword id="KW-0813">Transport</keyword>
<gene>
    <name evidence="1" type="primary">tatC</name>
    <name type="ordered locus">Rv2093c</name>
    <name type="ORF">MTCY49.33c</name>
</gene>
<proteinExistence type="evidence at protein level"/>
<feature type="chain" id="PRO_0000098090" description="Sec-independent protein translocase protein TatC">
    <location>
        <begin position="1"/>
        <end position="308"/>
    </location>
</feature>
<feature type="transmembrane region" description="Helical" evidence="1">
    <location>
        <begin position="38"/>
        <end position="58"/>
    </location>
</feature>
<feature type="transmembrane region" description="Helical" evidence="1">
    <location>
        <begin position="109"/>
        <end position="129"/>
    </location>
</feature>
<feature type="transmembrane region" description="Helical" evidence="1">
    <location>
        <begin position="142"/>
        <end position="162"/>
    </location>
</feature>
<feature type="transmembrane region" description="Helical" evidence="1">
    <location>
        <begin position="190"/>
        <end position="210"/>
    </location>
</feature>
<feature type="transmembrane region" description="Helical" evidence="1">
    <location>
        <begin position="229"/>
        <end position="249"/>
    </location>
</feature>
<feature type="transmembrane region" description="Helical" evidence="1">
    <location>
        <begin position="250"/>
        <end position="270"/>
    </location>
</feature>
<feature type="region of interest" description="Disordered" evidence="2">
    <location>
        <begin position="277"/>
        <end position="308"/>
    </location>
</feature>
<sequence>MRAAGLLKRLNPRNRRSRVNPDATMSLVDHLTELRTRLLISLAAILVTTIFGFVWYSHSIFGLDSLGEWLRHPYCALPQSARADISADGECRLLATAPFDQFMLRLKVGMAAGIVLACPVWFYQLWAFITPGLYQRERRFAVAFVIPAAVLFVAGAVLAYLVLSKALGFLLTVGSDVQVTALSGDRYFGFLLNLLVVFGVSFEFPLLIVMLNLAGLLTYERLKSWRRGLIFAMFVFAAIFTPGSDPFSMTALGAALTVLLELAIQIARVHDKRKAKREAAIPDDEASVIDPPSPVPAPSVIGSHDDVT</sequence>
<protein>
    <recommendedName>
        <fullName evidence="1">Sec-independent protein translocase protein TatC</fullName>
    </recommendedName>
</protein>
<evidence type="ECO:0000255" key="1">
    <source>
        <dbReference type="HAMAP-Rule" id="MF_00902"/>
    </source>
</evidence>
<evidence type="ECO:0000256" key="2">
    <source>
        <dbReference type="SAM" id="MobiDB-lite"/>
    </source>
</evidence>
<evidence type="ECO:0000269" key="3">
    <source>
    </source>
</evidence>
<dbReference type="EMBL" id="AL123456">
    <property type="protein sequence ID" value="CCP44868.1"/>
    <property type="molecule type" value="Genomic_DNA"/>
</dbReference>
<dbReference type="PIR" id="H70767">
    <property type="entry name" value="H70767"/>
</dbReference>
<dbReference type="RefSeq" id="NP_216609.1">
    <property type="nucleotide sequence ID" value="NC_000962.3"/>
</dbReference>
<dbReference type="RefSeq" id="WP_003410764.1">
    <property type="nucleotide sequence ID" value="NZ_NVQJ01000061.1"/>
</dbReference>
<dbReference type="SMR" id="P9WG97"/>
<dbReference type="FunCoup" id="P9WG97">
    <property type="interactions" value="179"/>
</dbReference>
<dbReference type="STRING" id="83332.Rv2093c"/>
<dbReference type="PaxDb" id="83332-Rv2093c"/>
<dbReference type="DNASU" id="888068"/>
<dbReference type="GeneID" id="888068"/>
<dbReference type="KEGG" id="mtu:Rv2093c"/>
<dbReference type="KEGG" id="mtv:RVBD_2093c"/>
<dbReference type="PATRIC" id="fig|83332.111.peg.2333"/>
<dbReference type="TubercuList" id="Rv2093c"/>
<dbReference type="eggNOG" id="COG0805">
    <property type="taxonomic scope" value="Bacteria"/>
</dbReference>
<dbReference type="InParanoid" id="P9WG97"/>
<dbReference type="OrthoDB" id="9777044at2"/>
<dbReference type="PhylomeDB" id="P9WG97"/>
<dbReference type="Proteomes" id="UP000001584">
    <property type="component" value="Chromosome"/>
</dbReference>
<dbReference type="GO" id="GO:0005829">
    <property type="term" value="C:cytosol"/>
    <property type="evidence" value="ECO:0007005"/>
    <property type="project" value="MTBBASE"/>
</dbReference>
<dbReference type="GO" id="GO:0033281">
    <property type="term" value="C:TAT protein transport complex"/>
    <property type="evidence" value="ECO:0000318"/>
    <property type="project" value="GO_Central"/>
</dbReference>
<dbReference type="GO" id="GO:0009977">
    <property type="term" value="F:proton motive force dependent protein transmembrane transporter activity"/>
    <property type="evidence" value="ECO:0000318"/>
    <property type="project" value="GO_Central"/>
</dbReference>
<dbReference type="GO" id="GO:0065002">
    <property type="term" value="P:intracellular protein transmembrane transport"/>
    <property type="evidence" value="ECO:0000318"/>
    <property type="project" value="GO_Central"/>
</dbReference>
<dbReference type="GO" id="GO:0043953">
    <property type="term" value="P:protein transport by the Tat complex"/>
    <property type="evidence" value="ECO:0000318"/>
    <property type="project" value="GO_Central"/>
</dbReference>
<dbReference type="HAMAP" id="MF_00902">
    <property type="entry name" value="TatC"/>
    <property type="match status" value="1"/>
</dbReference>
<dbReference type="InterPro" id="IPR019820">
    <property type="entry name" value="Sec-indep_translocase_CS"/>
</dbReference>
<dbReference type="InterPro" id="IPR002033">
    <property type="entry name" value="TatC"/>
</dbReference>
<dbReference type="NCBIfam" id="TIGR00945">
    <property type="entry name" value="tatC"/>
    <property type="match status" value="1"/>
</dbReference>
<dbReference type="PANTHER" id="PTHR30371">
    <property type="entry name" value="SEC-INDEPENDENT PROTEIN TRANSLOCASE PROTEIN TATC"/>
    <property type="match status" value="1"/>
</dbReference>
<dbReference type="PANTHER" id="PTHR30371:SF0">
    <property type="entry name" value="SEC-INDEPENDENT PROTEIN TRANSLOCASE PROTEIN TATC, CHLOROPLASTIC-RELATED"/>
    <property type="match status" value="1"/>
</dbReference>
<dbReference type="Pfam" id="PF00902">
    <property type="entry name" value="TatC"/>
    <property type="match status" value="1"/>
</dbReference>
<dbReference type="PRINTS" id="PR01840">
    <property type="entry name" value="TATCFAMILY"/>
</dbReference>
<dbReference type="PROSITE" id="PS01218">
    <property type="entry name" value="TATC"/>
    <property type="match status" value="1"/>
</dbReference>
<comment type="function">
    <text evidence="1">Part of the twin-arginine translocation (Tat) system that transports large folded proteins containing a characteristic twin-arginine motif in their signal peptide across membranes. Together with TatB, TatC is part of a receptor directly interacting with Tat signal peptides.</text>
</comment>
<comment type="subunit">
    <text evidence="1">The Tat system comprises two distinct complexes: a TatABC complex, containing multiple copies of TatA, TatB and TatC subunits, and a separate TatA complex, containing only TatA subunits. Substrates initially bind to the TatABC complex, which probably triggers association of the separate TatA complex to form the active translocon.</text>
</comment>
<comment type="subcellular location">
    <subcellularLocation>
        <location evidence="1">Cell membrane</location>
        <topology evidence="1">Multi-pass membrane protein</topology>
    </subcellularLocation>
</comment>
<comment type="disruption phenotype">
    <text evidence="3">Essential for growth.</text>
</comment>
<comment type="similarity">
    <text evidence="1">Belongs to the TatC family.</text>
</comment>
<accession>P9WG97</accession>
<accession>L0T8U4</accession>
<accession>P66895</accession>
<accession>Q10702</accession>